<keyword id="KW-0997">Cell inner membrane</keyword>
<keyword id="KW-1003">Cell membrane</keyword>
<keyword id="KW-0406">Ion transport</keyword>
<keyword id="KW-0472">Membrane</keyword>
<keyword id="KW-0812">Transmembrane</keyword>
<keyword id="KW-1133">Transmembrane helix</keyword>
<keyword id="KW-0813">Transport</keyword>
<keyword id="KW-0862">Zinc</keyword>
<accession>B1XCH1</accession>
<evidence type="ECO:0000255" key="1">
    <source>
        <dbReference type="HAMAP-Rule" id="MF_01565"/>
    </source>
</evidence>
<dbReference type="EMBL" id="CP000948">
    <property type="protein sequence ID" value="ACB02563.1"/>
    <property type="molecule type" value="Genomic_DNA"/>
</dbReference>
<dbReference type="RefSeq" id="WP_000387388.1">
    <property type="nucleotide sequence ID" value="NC_010473.1"/>
</dbReference>
<dbReference type="SMR" id="B1XCH1"/>
<dbReference type="GeneID" id="93775479"/>
<dbReference type="KEGG" id="ecd:ECDH10B_1463"/>
<dbReference type="HOGENOM" id="CLU_007127_2_0_6"/>
<dbReference type="GO" id="GO:0005886">
    <property type="term" value="C:plasma membrane"/>
    <property type="evidence" value="ECO:0007669"/>
    <property type="project" value="UniProtKB-SubCell"/>
</dbReference>
<dbReference type="GO" id="GO:0050897">
    <property type="term" value="F:cobalt ion binding"/>
    <property type="evidence" value="ECO:0007669"/>
    <property type="project" value="TreeGrafter"/>
</dbReference>
<dbReference type="GO" id="GO:0015087">
    <property type="term" value="F:cobalt ion transmembrane transporter activity"/>
    <property type="evidence" value="ECO:0007669"/>
    <property type="project" value="TreeGrafter"/>
</dbReference>
<dbReference type="GO" id="GO:0000287">
    <property type="term" value="F:magnesium ion binding"/>
    <property type="evidence" value="ECO:0007669"/>
    <property type="project" value="TreeGrafter"/>
</dbReference>
<dbReference type="GO" id="GO:0015095">
    <property type="term" value="F:magnesium ion transmembrane transporter activity"/>
    <property type="evidence" value="ECO:0007669"/>
    <property type="project" value="TreeGrafter"/>
</dbReference>
<dbReference type="GO" id="GO:0005385">
    <property type="term" value="F:zinc ion transmembrane transporter activity"/>
    <property type="evidence" value="ECO:0007669"/>
    <property type="project" value="UniProtKB-UniRule"/>
</dbReference>
<dbReference type="CDD" id="cd12833">
    <property type="entry name" value="ZntB-like_1"/>
    <property type="match status" value="1"/>
</dbReference>
<dbReference type="FunFam" id="1.20.58.340:FF:000002">
    <property type="entry name" value="Zinc transport protein ZntB"/>
    <property type="match status" value="1"/>
</dbReference>
<dbReference type="FunFam" id="1.20.58.340:FF:000003">
    <property type="entry name" value="Zinc transport protein ZntB"/>
    <property type="match status" value="1"/>
</dbReference>
<dbReference type="FunFam" id="3.30.460.20:FF:000001">
    <property type="entry name" value="Zinc transport protein ZntB"/>
    <property type="match status" value="1"/>
</dbReference>
<dbReference type="Gene3D" id="3.30.460.20">
    <property type="entry name" value="CorA soluble domain-like"/>
    <property type="match status" value="1"/>
</dbReference>
<dbReference type="Gene3D" id="1.20.58.340">
    <property type="entry name" value="Magnesium transport protein CorA, transmembrane region"/>
    <property type="match status" value="2"/>
</dbReference>
<dbReference type="HAMAP" id="MF_01565">
    <property type="entry name" value="ZntB"/>
    <property type="match status" value="1"/>
</dbReference>
<dbReference type="InterPro" id="IPR045861">
    <property type="entry name" value="CorA_cytoplasmic_dom"/>
</dbReference>
<dbReference type="InterPro" id="IPR045863">
    <property type="entry name" value="CorA_TM1_TM2"/>
</dbReference>
<dbReference type="InterPro" id="IPR002523">
    <property type="entry name" value="MgTranspt_CorA/ZnTranspt_ZntB"/>
</dbReference>
<dbReference type="InterPro" id="IPR023714">
    <property type="entry name" value="Zn_transp_ZntB"/>
</dbReference>
<dbReference type="NCBIfam" id="NF007092">
    <property type="entry name" value="PRK09546.1"/>
    <property type="match status" value="1"/>
</dbReference>
<dbReference type="PANTHER" id="PTHR46494">
    <property type="entry name" value="CORA FAMILY METAL ION TRANSPORTER (EUROFUNG)"/>
    <property type="match status" value="1"/>
</dbReference>
<dbReference type="PANTHER" id="PTHR46494:SF3">
    <property type="entry name" value="ZINC TRANSPORT PROTEIN ZNTB"/>
    <property type="match status" value="1"/>
</dbReference>
<dbReference type="Pfam" id="PF01544">
    <property type="entry name" value="CorA"/>
    <property type="match status" value="1"/>
</dbReference>
<dbReference type="SUPFAM" id="SSF143865">
    <property type="entry name" value="CorA soluble domain-like"/>
    <property type="match status" value="1"/>
</dbReference>
<dbReference type="SUPFAM" id="SSF144083">
    <property type="entry name" value="Magnesium transport protein CorA, transmembrane region"/>
    <property type="match status" value="1"/>
</dbReference>
<organism>
    <name type="scientific">Escherichia coli (strain K12 / DH10B)</name>
    <dbReference type="NCBI Taxonomy" id="316385"/>
    <lineage>
        <taxon>Bacteria</taxon>
        <taxon>Pseudomonadati</taxon>
        <taxon>Pseudomonadota</taxon>
        <taxon>Gammaproteobacteria</taxon>
        <taxon>Enterobacterales</taxon>
        <taxon>Enterobacteriaceae</taxon>
        <taxon>Escherichia</taxon>
    </lineage>
</organism>
<gene>
    <name evidence="1" type="primary">zntB</name>
    <name type="ordered locus">ECDH10B_1463</name>
</gene>
<proteinExistence type="inferred from homology"/>
<comment type="function">
    <text evidence="1">Zinc transporter. Acts as a Zn(2+):proton symporter, which likely mediates zinc ion uptake.</text>
</comment>
<comment type="catalytic activity">
    <reaction evidence="1">
        <text>Zn(2+)(out) + H(+)(out) = Zn(2+)(in) + H(+)(in)</text>
        <dbReference type="Rhea" id="RHEA:71195"/>
        <dbReference type="ChEBI" id="CHEBI:15378"/>
        <dbReference type="ChEBI" id="CHEBI:29105"/>
    </reaction>
    <physiologicalReaction direction="left-to-right" evidence="1">
        <dbReference type="Rhea" id="RHEA:71196"/>
    </physiologicalReaction>
</comment>
<comment type="subcellular location">
    <subcellularLocation>
        <location evidence="1">Cell inner membrane</location>
        <topology evidence="1">Multi-pass membrane protein</topology>
    </subcellularLocation>
</comment>
<comment type="similarity">
    <text evidence="1">Belongs to the CorA metal ion transporter (MIT) (TC 1.A.35) family.</text>
</comment>
<feature type="chain" id="PRO_1000189714" description="Zinc transport protein ZntB">
    <location>
        <begin position="1"/>
        <end position="327"/>
    </location>
</feature>
<feature type="topological domain" description="Cytoplasmic" evidence="1">
    <location>
        <begin position="1"/>
        <end position="273"/>
    </location>
</feature>
<feature type="transmembrane region" description="Helical" evidence="1">
    <location>
        <begin position="274"/>
        <end position="294"/>
    </location>
</feature>
<feature type="topological domain" description="Periplasmic" evidence="1">
    <location>
        <begin position="295"/>
        <end position="300"/>
    </location>
</feature>
<feature type="transmembrane region" description="Helical" evidence="1">
    <location>
        <begin position="301"/>
        <end position="321"/>
    </location>
</feature>
<feature type="topological domain" description="Cytoplasmic" evidence="1">
    <location>
        <begin position="322"/>
        <end position="327"/>
    </location>
</feature>
<sequence>MEAIKGSDVNVPDAVFAWMLDGRGGVKPLENTDVIDEAHPCWLHLNYVHHDSAQWLATTPLLPNNVRDALAGESTRPRVSRLGEGTLITLRCINGSTDERPDQLVAMRVYMDGRLIVSTRQRKVLALDDVVSDLEEGTGPTDCGGWLVDVCDALTDHSSEFIEQLHDKIIDLEDNLLDQQIPPRGFLALLRKQLIVMRRYMAPQRDVYARLASERLPWMSDDQRRRMQDIADRLGRGLDEIDACIARTGVMADEIAQVMQENLARRTYTMSLMAMVFLPSTFLTGLFGVNLGGIPGGGWQFGFSIFCILLVVLIGGVALWLHRSKWL</sequence>
<protein>
    <recommendedName>
        <fullName evidence="1">Zinc transport protein ZntB</fullName>
    </recommendedName>
</protein>
<reference key="1">
    <citation type="journal article" date="2008" name="J. Bacteriol.">
        <title>The complete genome sequence of Escherichia coli DH10B: insights into the biology of a laboratory workhorse.</title>
        <authorList>
            <person name="Durfee T."/>
            <person name="Nelson R."/>
            <person name="Baldwin S."/>
            <person name="Plunkett G. III"/>
            <person name="Burland V."/>
            <person name="Mau B."/>
            <person name="Petrosino J.F."/>
            <person name="Qin X."/>
            <person name="Muzny D.M."/>
            <person name="Ayele M."/>
            <person name="Gibbs R.A."/>
            <person name="Csorgo B."/>
            <person name="Posfai G."/>
            <person name="Weinstock G.M."/>
            <person name="Blattner F.R."/>
        </authorList>
    </citation>
    <scope>NUCLEOTIDE SEQUENCE [LARGE SCALE GENOMIC DNA]</scope>
    <source>
        <strain>K12 / DH10B</strain>
    </source>
</reference>
<name>ZNTB_ECODH</name>